<organism>
    <name type="scientific">Pseudomonas aeruginosa (strain ATCC 15692 / DSM 22644 / CIP 104116 / JCM 14847 / LMG 12228 / 1C / PRS 101 / PAO1)</name>
    <dbReference type="NCBI Taxonomy" id="208964"/>
    <lineage>
        <taxon>Bacteria</taxon>
        <taxon>Pseudomonadati</taxon>
        <taxon>Pseudomonadota</taxon>
        <taxon>Gammaproteobacteria</taxon>
        <taxon>Pseudomonadales</taxon>
        <taxon>Pseudomonadaceae</taxon>
        <taxon>Pseudomonas</taxon>
    </lineage>
</organism>
<feature type="chain" id="PRO_0000448915" description="Type VI secretion system spike protein VgrG2b">
    <location>
        <begin position="1"/>
        <end position="1019"/>
    </location>
</feature>
<feature type="region of interest" description="Disordered" evidence="1">
    <location>
        <begin position="268"/>
        <end position="291"/>
    </location>
</feature>
<feature type="active site" evidence="4 8">
    <location>
        <position position="936"/>
    </location>
</feature>
<feature type="binding site" evidence="4 8">
    <location>
        <position position="935"/>
    </location>
    <ligand>
        <name>Zn(2+)</name>
        <dbReference type="ChEBI" id="CHEBI:29105"/>
        <note>catalytic</note>
    </ligand>
</feature>
<feature type="binding site" evidence="4 8">
    <location>
        <position position="939"/>
    </location>
    <ligand>
        <name>Zn(2+)</name>
        <dbReference type="ChEBI" id="CHEBI:29105"/>
        <note>catalytic</note>
    </ligand>
</feature>
<feature type="binding site" evidence="4 8">
    <location>
        <position position="983"/>
    </location>
    <ligand>
        <name>Zn(2+)</name>
        <dbReference type="ChEBI" id="CHEBI:29105"/>
        <note>catalytic</note>
    </ligand>
</feature>
<feature type="mutagenesis site" description="Abolishes bacterial periplasmic toxicity." evidence="4">
    <original>H</original>
    <variation>A</variation>
    <location>
        <position position="935"/>
    </location>
</feature>
<feature type="mutagenesis site" description="Abolishes bacterial periplasmic toxicity." evidence="4">
    <original>E</original>
    <variation>A</variation>
    <location>
        <position position="936"/>
    </location>
</feature>
<feature type="mutagenesis site" description="Abolishes bacterial periplasmic toxicity." evidence="4">
    <original>H</original>
    <variation>A</variation>
    <location>
        <position position="939"/>
    </location>
</feature>
<feature type="helix" evidence="9">
    <location>
        <begin position="834"/>
        <end position="854"/>
    </location>
</feature>
<feature type="helix" evidence="9">
    <location>
        <begin position="868"/>
        <end position="878"/>
    </location>
</feature>
<feature type="turn" evidence="9">
    <location>
        <begin position="884"/>
        <end position="886"/>
    </location>
</feature>
<feature type="strand" evidence="9">
    <location>
        <begin position="888"/>
        <end position="892"/>
    </location>
</feature>
<feature type="strand" evidence="9">
    <location>
        <begin position="906"/>
        <end position="912"/>
    </location>
</feature>
<feature type="helix" evidence="9">
    <location>
        <begin position="914"/>
        <end position="916"/>
    </location>
</feature>
<feature type="helix" evidence="9">
    <location>
        <begin position="922"/>
        <end position="924"/>
    </location>
</feature>
<feature type="helix" evidence="9">
    <location>
        <begin position="927"/>
        <end position="944"/>
    </location>
</feature>
<feature type="helix" evidence="9">
    <location>
        <begin position="949"/>
        <end position="962"/>
    </location>
</feature>
<feature type="helix" evidence="9">
    <location>
        <begin position="977"/>
        <end position="979"/>
    </location>
</feature>
<feature type="helix" evidence="9">
    <location>
        <begin position="982"/>
        <end position="998"/>
    </location>
</feature>
<feature type="helix" evidence="9">
    <location>
        <begin position="1000"/>
        <end position="1008"/>
    </location>
</feature>
<feature type="turn" evidence="9">
    <location>
        <begin position="1009"/>
        <end position="1011"/>
    </location>
</feature>
<sequence length="1019" mass="112964">MRQRDLKFTFVVGEGKLAFDVVEFELEEALCEPFRLNLKLASDKNAIDFKQVLDQPGTFTLWQDGRPARYVHGIVSHFTQGSSGFRRTRYELLLEPQLARLELCCNWRIFQEKSVPEILQALLKEHRVLDYEQRIYHEHLPREYCVQAGDSDHYLHDRLAFEEGLVYYFRFDEHRHTLVCSDRLYVQERIAGGPVLFSAQPEGDNPQPVLHSFRYSENVRTARQTQRDYSFKRPTYDQEHHLAGEALEHQGSSYERYDYPGRYKRSGAGRPFTESRLRGHRRDARVASVSGDDPRLIPGHAFALEGHPRADFNAWWRPVRVVHRGTQYAGQEEESADAPLGVSYDLRAELVPEDVEWRPAPLPRPRIDGPQIATVVGPAGEEIHCDEWGRVKVQFPWDREGRHDEFSTCWIRVAQNWAGADWGHMAIPRIGQEVIVDYLDGDCDQPIVTGRTYRATNRPPYALPDHKILSTIKSKEYKGSRANELRIDDTTAQISAALMSDHGASALHLGYLTHPRPEGGKPRGEGFELRTDEHGAVRAAKGLLLSTEEQLRAGAGHLDRGVVVQVLEAALELARELGDYAGEHQGVGHDAAPQQTLQEAVRDLGHGANDESGKSNGGKPAIALSGPAGIAAATPASLTLAAGEHVDSVARQNQQVTAGQKVVINAGSDIGLFAQGGELRQITHQGPMLLQAQKNDIRLEAKQSVEVSASQQHVLVTAKEHITLMCGGAYLTLKGGNIELGMPGNFVVKAAKHSHVGAASLEAELPQFEVGETQRRFVLKQLDGQTAMPNVPYTITMANGEVIEGVTDAEGATQLLQKDAMNIAKVDMKHTKSPASAVAGIAAAVGAAVAVGKLLGGPDAEAGRALSEGEISLAKGVFGDSIDYSTVRLRDEDYVPWQGKDYVMAPNGHIYFGEELRGVADWSLESLQRQGLFIHEMTHVWQHQHGVNVLLVGAYQQARQFLLGDQYAYRLEPGKTLKDYNIEQQGDIVRDYFLEKNEFGEASANSRFAGVLKNFPTGY</sequence>
<protein>
    <recommendedName>
        <fullName evidence="5">Type VI secretion system spike protein VgrG2b</fullName>
    </recommendedName>
    <alternativeName>
        <fullName evidence="5">Metallopeptidase effector VgrG2b</fullName>
        <ecNumber evidence="4">3.4.24.-</ecNumber>
    </alternativeName>
</protein>
<keyword id="KW-0002">3D-structure</keyword>
<keyword id="KW-0378">Hydrolase</keyword>
<keyword id="KW-0479">Metal-binding</keyword>
<keyword id="KW-1185">Reference proteome</keyword>
<keyword id="KW-0964">Secreted</keyword>
<keyword id="KW-0862">Zinc</keyword>
<gene>
    <name type="primary">vgrG2b</name>
    <name type="ordered locus">PA0262</name>
</gene>
<proteinExistence type="evidence at protein level"/>
<evidence type="ECO:0000256" key="1">
    <source>
        <dbReference type="SAM" id="MobiDB-lite"/>
    </source>
</evidence>
<evidence type="ECO:0000269" key="2">
    <source>
    </source>
</evidence>
<evidence type="ECO:0000269" key="3">
    <source>
    </source>
</evidence>
<evidence type="ECO:0000269" key="4">
    <source>
    </source>
</evidence>
<evidence type="ECO:0000303" key="5">
    <source>
    </source>
</evidence>
<evidence type="ECO:0000305" key="6"/>
<evidence type="ECO:0000305" key="7">
    <source>
    </source>
</evidence>
<evidence type="ECO:0007744" key="8">
    <source>
        <dbReference type="PDB" id="6H56"/>
    </source>
</evidence>
<evidence type="ECO:0007829" key="9">
    <source>
        <dbReference type="PDB" id="6H56"/>
    </source>
</evidence>
<dbReference type="EC" id="3.4.24.-" evidence="4"/>
<dbReference type="EMBL" id="AE004091">
    <property type="protein sequence ID" value="AAG03651.1"/>
    <property type="molecule type" value="Genomic_DNA"/>
</dbReference>
<dbReference type="PIR" id="A83613">
    <property type="entry name" value="A83613"/>
</dbReference>
<dbReference type="RefSeq" id="NP_248953.1">
    <property type="nucleotide sequence ID" value="NC_002516.2"/>
</dbReference>
<dbReference type="RefSeq" id="WP_003147109.1">
    <property type="nucleotide sequence ID" value="NZ_CP129519.1"/>
</dbReference>
<dbReference type="PDB" id="6H56">
    <property type="method" value="X-ray"/>
    <property type="resolution" value="3.20 A"/>
    <property type="chains" value="A/B=770-1019"/>
</dbReference>
<dbReference type="PDBsum" id="6H56"/>
<dbReference type="SMR" id="Q9I6M7"/>
<dbReference type="IntAct" id="Q9I6M7">
    <property type="interactions" value="1"/>
</dbReference>
<dbReference type="MINT" id="Q9I6M7"/>
<dbReference type="STRING" id="208964.PA0262"/>
<dbReference type="PaxDb" id="208964-PA0262"/>
<dbReference type="GeneID" id="881981"/>
<dbReference type="KEGG" id="pae:PA0262"/>
<dbReference type="PATRIC" id="fig|208964.12.peg.273"/>
<dbReference type="PseudoCAP" id="PA0262"/>
<dbReference type="HOGENOM" id="CLU_004121_1_4_6"/>
<dbReference type="InParanoid" id="Q9I6M7"/>
<dbReference type="OrthoDB" id="9762420at2"/>
<dbReference type="PhylomeDB" id="Q9I6M7"/>
<dbReference type="BioCyc" id="PAER208964:G1FZ6-264-MONOMER"/>
<dbReference type="Proteomes" id="UP000002438">
    <property type="component" value="Chromosome"/>
</dbReference>
<dbReference type="GO" id="GO:0005576">
    <property type="term" value="C:extracellular region"/>
    <property type="evidence" value="ECO:0007669"/>
    <property type="project" value="UniProtKB-SubCell"/>
</dbReference>
<dbReference type="GO" id="GO:0033104">
    <property type="term" value="C:type VI protein secretion system complex"/>
    <property type="evidence" value="ECO:0000317"/>
    <property type="project" value="PseudoCAP"/>
</dbReference>
<dbReference type="GO" id="GO:0016787">
    <property type="term" value="F:hydrolase activity"/>
    <property type="evidence" value="ECO:0007669"/>
    <property type="project" value="UniProtKB-KW"/>
</dbReference>
<dbReference type="GO" id="GO:0046872">
    <property type="term" value="F:metal ion binding"/>
    <property type="evidence" value="ECO:0007669"/>
    <property type="project" value="UniProtKB-KW"/>
</dbReference>
<dbReference type="GO" id="GO:0033103">
    <property type="term" value="P:protein secretion by the type VI secretion system"/>
    <property type="evidence" value="ECO:0000317"/>
    <property type="project" value="PseudoCAP"/>
</dbReference>
<dbReference type="Gene3D" id="2.30.110.50">
    <property type="match status" value="1"/>
</dbReference>
<dbReference type="Gene3D" id="4.10.220.110">
    <property type="match status" value="1"/>
</dbReference>
<dbReference type="Gene3D" id="3.55.50.10">
    <property type="entry name" value="Baseplate protein-like domains"/>
    <property type="match status" value="1"/>
</dbReference>
<dbReference type="Gene3D" id="2.40.50.230">
    <property type="entry name" value="Gp5 N-terminal domain"/>
    <property type="match status" value="1"/>
</dbReference>
<dbReference type="InterPro" id="IPR006531">
    <property type="entry name" value="Gp5/Vgr_OB"/>
</dbReference>
<dbReference type="InterPro" id="IPR028244">
    <property type="entry name" value="T6SS_Rhs_Vgr_dom"/>
</dbReference>
<dbReference type="InterPro" id="IPR017847">
    <property type="entry name" value="T6SS_RhsGE_Vgr_subset"/>
</dbReference>
<dbReference type="InterPro" id="IPR006533">
    <property type="entry name" value="T6SS_Vgr_RhsGE"/>
</dbReference>
<dbReference type="InterPro" id="IPR050708">
    <property type="entry name" value="T6SS_VgrG/RHS"/>
</dbReference>
<dbReference type="InterPro" id="IPR037026">
    <property type="entry name" value="Vgr_OB-fold_dom_sf"/>
</dbReference>
<dbReference type="InterPro" id="IPR018769">
    <property type="entry name" value="VgrG2_DUF2345"/>
</dbReference>
<dbReference type="NCBIfam" id="TIGR01646">
    <property type="entry name" value="vgr_GE"/>
    <property type="match status" value="1"/>
</dbReference>
<dbReference type="NCBIfam" id="TIGR03361">
    <property type="entry name" value="VI_Rhs_Vgr"/>
    <property type="match status" value="1"/>
</dbReference>
<dbReference type="PANTHER" id="PTHR32305">
    <property type="match status" value="1"/>
</dbReference>
<dbReference type="PANTHER" id="PTHR32305:SF11">
    <property type="entry name" value="TYPE VI SECRETION SYSTEM SPIKE PROTEIN VGRG3"/>
    <property type="match status" value="1"/>
</dbReference>
<dbReference type="Pfam" id="PF10106">
    <property type="entry name" value="DUF2345"/>
    <property type="match status" value="1"/>
</dbReference>
<dbReference type="Pfam" id="PF04717">
    <property type="entry name" value="Phage_base_V"/>
    <property type="match status" value="1"/>
</dbReference>
<dbReference type="Pfam" id="PF05954">
    <property type="entry name" value="Phage_GPD"/>
    <property type="match status" value="1"/>
</dbReference>
<dbReference type="Pfam" id="PF13296">
    <property type="entry name" value="T6SS_Vgr"/>
    <property type="match status" value="1"/>
</dbReference>
<dbReference type="SUPFAM" id="SSF69255">
    <property type="entry name" value="gp5 N-terminal domain-like"/>
    <property type="match status" value="1"/>
</dbReference>
<dbReference type="SUPFAM" id="SSF69349">
    <property type="entry name" value="Phage fibre proteins"/>
    <property type="match status" value="1"/>
</dbReference>
<dbReference type="SUPFAM" id="SSF69279">
    <property type="entry name" value="Phage tail proteins"/>
    <property type="match status" value="2"/>
</dbReference>
<dbReference type="PROSITE" id="PS00142">
    <property type="entry name" value="ZINC_PROTEASE"/>
    <property type="match status" value="1"/>
</dbReference>
<reference key="1">
    <citation type="journal article" date="2000" name="Nature">
        <title>Complete genome sequence of Pseudomonas aeruginosa PAO1, an opportunistic pathogen.</title>
        <authorList>
            <person name="Stover C.K."/>
            <person name="Pham X.-Q.T."/>
            <person name="Erwin A.L."/>
            <person name="Mizoguchi S.D."/>
            <person name="Warrener P."/>
            <person name="Hickey M.J."/>
            <person name="Brinkman F.S.L."/>
            <person name="Hufnagle W.O."/>
            <person name="Kowalik D.J."/>
            <person name="Lagrou M."/>
            <person name="Garber R.L."/>
            <person name="Goltry L."/>
            <person name="Tolentino E."/>
            <person name="Westbrock-Wadman S."/>
            <person name="Yuan Y."/>
            <person name="Brody L.L."/>
            <person name="Coulter S.N."/>
            <person name="Folger K.R."/>
            <person name="Kas A."/>
            <person name="Larbig K."/>
            <person name="Lim R.M."/>
            <person name="Smith K.A."/>
            <person name="Spencer D.H."/>
            <person name="Wong G.K.-S."/>
            <person name="Wu Z."/>
            <person name="Paulsen I.T."/>
            <person name="Reizer J."/>
            <person name="Saier M.H. Jr."/>
            <person name="Hancock R.E.W."/>
            <person name="Lory S."/>
            <person name="Olson M.V."/>
        </authorList>
    </citation>
    <scope>NUCLEOTIDE SEQUENCE [LARGE SCALE GENOMIC DNA]</scope>
    <source>
        <strain>ATCC 15692 / DSM 22644 / CIP 104116 / JCM 14847 / LMG 12228 / 1C / PRS 101 / PAO1</strain>
    </source>
</reference>
<reference key="2">
    <citation type="journal article" date="2015" name="MBio">
        <title>Internalization of Pseudomonas aeruginosa Strain PAO1 into Epithelial Cells Is Promoted by Interaction of a T6SS Effector with the Microtubule Network.</title>
        <authorList>
            <person name="Sana T.G."/>
            <person name="Baumann C."/>
            <person name="Merdes A."/>
            <person name="Soscia C."/>
            <person name="Rattei T."/>
            <person name="Hachani A."/>
            <person name="Jones C."/>
            <person name="Bennett K.L."/>
            <person name="Filloux A."/>
            <person name="Superti-Furga G."/>
            <person name="Voulhoux R."/>
            <person name="Bleves S."/>
        </authorList>
    </citation>
    <scope>FUNCTION</scope>
    <scope>DISRUPTION PHENOTYPE</scope>
    <scope>SUBCELLULAR LOCATION</scope>
    <scope>INTERACTION WITH HOST GCP1 AND GCP4</scope>
</reference>
<reference key="3">
    <citation type="journal article" date="2019" name="Cell Rep.">
        <title>The Pseudomonas aeruginosa T6SS Delivers a Periplasmic Toxin that Disrupts Bacterial Cell Morphology.</title>
        <authorList>
            <person name="Wood T.E."/>
            <person name="Howard S.A."/>
            <person name="Foerster A."/>
            <person name="Nolan L.M."/>
            <person name="Manoli E."/>
            <person name="Bullen N.P."/>
            <person name="Yau H.C.L."/>
            <person name="Hachani A."/>
            <person name="Hayward R.D."/>
            <person name="Whitney J.C."/>
            <person name="Vollmer W."/>
            <person name="Freemont P.S."/>
            <person name="Filloux A."/>
        </authorList>
    </citation>
    <scope>FUNCTION</scope>
    <scope>SUBCELLULAR LOCATION</scope>
    <scope>DOMAIN</scope>
    <scope>MUTAGENESIS OF HIS-935; GLU-936 AND HIS-939</scope>
    <scope>ACTIVE SITE</scope>
    <scope>CATALYTIC ACTIVITY</scope>
    <scope>COFACTOR</scope>
</reference>
<reference key="4">
    <citation type="journal article" date="2019" name="Front. Microbiol.">
        <title>A Type VI Secretion System Trans-Kingdom Effector Is Required for the Delivery of a Novel Antibacterial Toxin in Pseudomonas aeruginosa.</title>
        <authorList>
            <person name="Berni B."/>
            <person name="Soscia C."/>
            <person name="Djermoun S."/>
            <person name="Ize B."/>
            <person name="Bleves S."/>
        </authorList>
    </citation>
    <scope>FUNCTION</scope>
    <scope>INTERACTION WITH TLA3</scope>
    <scope>DISRUPTION PHENOTYPE</scope>
</reference>
<reference evidence="8" key="5">
    <citation type="submission" date="2018-07" db="PDB data bank">
        <title>Effector domain of Pseudomonas aeruginosa VgrG2b.</title>
        <authorList>
            <person name="Wood T.E."/>
            <person name="Forster A."/>
            <person name="Manoli E."/>
            <person name="Howard S."/>
            <person name="Hachani A."/>
            <person name="Hayward A.D."/>
            <person name="Freemont P.S."/>
            <person name="Filloux A."/>
        </authorList>
    </citation>
    <scope>X-RAY CRYSTALLOGRAPHY (3.20 ANGSTROMS) OF 770-1019</scope>
</reference>
<name>VGR2B_PSEAE</name>
<comment type="function">
    <text evidence="2 3 4 7">Part of the H2 type VI secretion system (H2-T6SS) specialized secretion system, which delivers several virulence factors in both prokaryotic and eukaryotic cells during infection (PubMed:26037124, PubMed:31231326, PubMed:31577948). Forms the spike at the tip of the elongating tube probably formed by haemolysin co-regulated protein 2b/Hcp2b (Probable). Allows the delivery of the Tle3 antibacterial toxin to target cells where it exerts its toxicity (PubMed:31231326). Additionally, acts directly as an effector and promotes internalization by interacting with the host gamma-tubulin ring complex (PubMed:26037124). Elicits toxicity also in the bacterial periplasm and disrupts bacterial cell morphology. Toxicity is counteracted by a cognate immunity protein (PubMed:31577948).</text>
</comment>
<comment type="cofactor">
    <cofactor evidence="4">
        <name>Zn(2+)</name>
        <dbReference type="ChEBI" id="CHEBI:29105"/>
    </cofactor>
</comment>
<comment type="subunit">
    <text evidence="3">Interacts with Tla3; this interaction promotes Tle3 loading onto VgrG2b. Interacts with host gamma-tubulin ring complex components GCP1 and GCP4.</text>
</comment>
<comment type="interaction">
    <interactant intactId="EBI-44433945">
        <id>Q9I6M7</id>
    </interactant>
    <interactant intactId="EBI-44433867">
        <id>Q9I6N0</id>
        <label>tla3</label>
    </interactant>
    <organismsDiffer>false</organismsDiffer>
    <experiments>2</experiments>
</comment>
<comment type="subcellular location">
    <subcellularLocation>
        <location evidence="2 4">Secreted</location>
    </subcellularLocation>
    <text evidence="2">Secreted by the H2 type VI (H2-T6SS) secretion system involving VgrG2a into host cells upon infection.</text>
</comment>
<comment type="domain">
    <text evidence="4">The C-terminal region is part of a wide family of metallopeptidase effectors.</text>
</comment>
<comment type="disruption phenotype">
    <text evidence="2">Deletion leads to a 75% loss of internalization of P.aeruginosa into host cell.</text>
</comment>
<comment type="similarity">
    <text evidence="6">Belongs to the VgrG protein family.</text>
</comment>
<accession>Q9I6M7</accession>